<sequence>MEFENIISAADKARILAEALPYIRRFSGSVAVIKYGGNAMTEPALKEGFARDVVLLKLVGIHPVIVHGGGPQINAMLEKVGKKGEFVQGMRVTDKETMDIVEMVLGGHVNKEIVSMINTYGGHAVGVSGRDDHFIKAKKLLVDTPEQNSVDIGQVGTVESIDTGLVKGLIERGCIPVVAPVGVGEKGEAFNINADLVAGKLAEELNAEKLLMMTNIAGVMDKTGNLLTKLTPKRIDGLIADGTLYGGMLPKIASAVEAAVNGVKATHIIDGRLPNALLLEIFTDAGIGSMILGRGEDA</sequence>
<reference key="1">
    <citation type="submission" date="2003-03" db="EMBL/GenBank/DDBJ databases">
        <title>The complete genome sequence of Neisseria gonorrhoeae.</title>
        <authorList>
            <person name="Lewis L.A."/>
            <person name="Gillaspy A.F."/>
            <person name="McLaughlin R.E."/>
            <person name="Gipson M."/>
            <person name="Ducey T.F."/>
            <person name="Ownbey T."/>
            <person name="Hartman K."/>
            <person name="Nydick C."/>
            <person name="Carson M.B."/>
            <person name="Vaughn J."/>
            <person name="Thomson C."/>
            <person name="Song L."/>
            <person name="Lin S."/>
            <person name="Yuan X."/>
            <person name="Najar F."/>
            <person name="Zhan M."/>
            <person name="Ren Q."/>
            <person name="Zhu H."/>
            <person name="Qi S."/>
            <person name="Kenton S.M."/>
            <person name="Lai H."/>
            <person name="White J.D."/>
            <person name="Clifton S."/>
            <person name="Roe B.A."/>
            <person name="Dyer D.W."/>
        </authorList>
    </citation>
    <scope>NUCLEOTIDE SEQUENCE [LARGE SCALE GENOMIC DNA]</scope>
    <source>
        <strain>ATCC 700825 / FA 1090</strain>
    </source>
</reference>
<protein>
    <recommendedName>
        <fullName evidence="1">Acetylglutamate kinase</fullName>
        <ecNumber evidence="1">2.7.2.8</ecNumber>
    </recommendedName>
    <alternativeName>
        <fullName evidence="1">N-acetyl-L-glutamate 5-phosphotransferase</fullName>
    </alternativeName>
    <alternativeName>
        <fullName evidence="1">NAG kinase</fullName>
        <shortName evidence="1">NAGK</shortName>
    </alternativeName>
</protein>
<organism>
    <name type="scientific">Neisseria gonorrhoeae (strain ATCC 700825 / FA 1090)</name>
    <dbReference type="NCBI Taxonomy" id="242231"/>
    <lineage>
        <taxon>Bacteria</taxon>
        <taxon>Pseudomonadati</taxon>
        <taxon>Pseudomonadota</taxon>
        <taxon>Betaproteobacteria</taxon>
        <taxon>Neisseriales</taxon>
        <taxon>Neisseriaceae</taxon>
        <taxon>Neisseria</taxon>
    </lineage>
</organism>
<accession>Q5F8D8</accession>
<comment type="function">
    <text evidence="1">Catalyzes the ATP-dependent phosphorylation of N-acetyl-L-glutamate.</text>
</comment>
<comment type="catalytic activity">
    <reaction evidence="1">
        <text>N-acetyl-L-glutamate + ATP = N-acetyl-L-glutamyl 5-phosphate + ADP</text>
        <dbReference type="Rhea" id="RHEA:14629"/>
        <dbReference type="ChEBI" id="CHEBI:30616"/>
        <dbReference type="ChEBI" id="CHEBI:44337"/>
        <dbReference type="ChEBI" id="CHEBI:57936"/>
        <dbReference type="ChEBI" id="CHEBI:456216"/>
        <dbReference type="EC" id="2.7.2.8"/>
    </reaction>
</comment>
<comment type="pathway">
    <text evidence="1">Amino-acid biosynthesis; L-arginine biosynthesis; N(2)-acetyl-L-ornithine from L-glutamate: step 2/4.</text>
</comment>
<comment type="subcellular location">
    <subcellularLocation>
        <location evidence="1">Cytoplasm</location>
    </subcellularLocation>
</comment>
<comment type="similarity">
    <text evidence="1">Belongs to the acetylglutamate kinase family. ArgB subfamily.</text>
</comment>
<proteinExistence type="inferred from homology"/>
<feature type="chain" id="PRO_0000264722" description="Acetylglutamate kinase">
    <location>
        <begin position="1"/>
        <end position="298"/>
    </location>
</feature>
<feature type="binding site" evidence="1">
    <location>
        <begin position="69"/>
        <end position="70"/>
    </location>
    <ligand>
        <name>substrate</name>
    </ligand>
</feature>
<feature type="binding site" evidence="1">
    <location>
        <position position="91"/>
    </location>
    <ligand>
        <name>substrate</name>
    </ligand>
</feature>
<feature type="binding site" evidence="1">
    <location>
        <position position="191"/>
    </location>
    <ligand>
        <name>substrate</name>
    </ligand>
</feature>
<feature type="site" description="Transition state stabilizer" evidence="1">
    <location>
        <position position="34"/>
    </location>
</feature>
<feature type="site" description="Transition state stabilizer" evidence="1">
    <location>
        <position position="251"/>
    </location>
</feature>
<keyword id="KW-0028">Amino-acid biosynthesis</keyword>
<keyword id="KW-0055">Arginine biosynthesis</keyword>
<keyword id="KW-0067">ATP-binding</keyword>
<keyword id="KW-0963">Cytoplasm</keyword>
<keyword id="KW-0418">Kinase</keyword>
<keyword id="KW-0547">Nucleotide-binding</keyword>
<keyword id="KW-1185">Reference proteome</keyword>
<keyword id="KW-0808">Transferase</keyword>
<evidence type="ECO:0000255" key="1">
    <source>
        <dbReference type="HAMAP-Rule" id="MF_00082"/>
    </source>
</evidence>
<gene>
    <name evidence="1" type="primary">argB</name>
    <name type="ordered locus">NGO_0844</name>
</gene>
<dbReference type="EC" id="2.7.2.8" evidence="1"/>
<dbReference type="EMBL" id="AE004969">
    <property type="protein sequence ID" value="AAW89549.1"/>
    <property type="molecule type" value="Genomic_DNA"/>
</dbReference>
<dbReference type="RefSeq" id="WP_003706280.1">
    <property type="nucleotide sequence ID" value="NC_002946.2"/>
</dbReference>
<dbReference type="RefSeq" id="YP_207961.1">
    <property type="nucleotide sequence ID" value="NC_002946.2"/>
</dbReference>
<dbReference type="SMR" id="Q5F8D8"/>
<dbReference type="STRING" id="242231.NGO_0844"/>
<dbReference type="KEGG" id="ngo:NGO_0844"/>
<dbReference type="PATRIC" id="fig|242231.10.peg.998"/>
<dbReference type="HOGENOM" id="CLU_053680_0_0_4"/>
<dbReference type="UniPathway" id="UPA00068">
    <property type="reaction ID" value="UER00107"/>
</dbReference>
<dbReference type="Proteomes" id="UP000000535">
    <property type="component" value="Chromosome"/>
</dbReference>
<dbReference type="GO" id="GO:0005737">
    <property type="term" value="C:cytoplasm"/>
    <property type="evidence" value="ECO:0007669"/>
    <property type="project" value="UniProtKB-SubCell"/>
</dbReference>
<dbReference type="GO" id="GO:0003991">
    <property type="term" value="F:acetylglutamate kinase activity"/>
    <property type="evidence" value="ECO:0007669"/>
    <property type="project" value="UniProtKB-UniRule"/>
</dbReference>
<dbReference type="GO" id="GO:0005524">
    <property type="term" value="F:ATP binding"/>
    <property type="evidence" value="ECO:0007669"/>
    <property type="project" value="UniProtKB-UniRule"/>
</dbReference>
<dbReference type="GO" id="GO:0042450">
    <property type="term" value="P:arginine biosynthetic process via ornithine"/>
    <property type="evidence" value="ECO:0007669"/>
    <property type="project" value="UniProtKB-UniRule"/>
</dbReference>
<dbReference type="GO" id="GO:0006526">
    <property type="term" value="P:L-arginine biosynthetic process"/>
    <property type="evidence" value="ECO:0007669"/>
    <property type="project" value="UniProtKB-UniPathway"/>
</dbReference>
<dbReference type="CDD" id="cd04250">
    <property type="entry name" value="AAK_NAGK-C"/>
    <property type="match status" value="1"/>
</dbReference>
<dbReference type="FunFam" id="3.40.1160.10:FF:000004">
    <property type="entry name" value="Acetylglutamate kinase"/>
    <property type="match status" value="1"/>
</dbReference>
<dbReference type="Gene3D" id="3.40.1160.10">
    <property type="entry name" value="Acetylglutamate kinase-like"/>
    <property type="match status" value="1"/>
</dbReference>
<dbReference type="HAMAP" id="MF_00082">
    <property type="entry name" value="ArgB"/>
    <property type="match status" value="1"/>
</dbReference>
<dbReference type="InterPro" id="IPR036393">
    <property type="entry name" value="AceGlu_kinase-like_sf"/>
</dbReference>
<dbReference type="InterPro" id="IPR004662">
    <property type="entry name" value="AcgluKinase_fam"/>
</dbReference>
<dbReference type="InterPro" id="IPR037528">
    <property type="entry name" value="ArgB"/>
</dbReference>
<dbReference type="InterPro" id="IPR001048">
    <property type="entry name" value="Asp/Glu/Uridylate_kinase"/>
</dbReference>
<dbReference type="InterPro" id="IPR001057">
    <property type="entry name" value="Glu/AcGlu_kinase"/>
</dbReference>
<dbReference type="InterPro" id="IPR041727">
    <property type="entry name" value="NAGK-C"/>
</dbReference>
<dbReference type="NCBIfam" id="TIGR00761">
    <property type="entry name" value="argB"/>
    <property type="match status" value="1"/>
</dbReference>
<dbReference type="PANTHER" id="PTHR23342">
    <property type="entry name" value="N-ACETYLGLUTAMATE SYNTHASE"/>
    <property type="match status" value="1"/>
</dbReference>
<dbReference type="PANTHER" id="PTHR23342:SF0">
    <property type="entry name" value="N-ACETYLGLUTAMATE SYNTHASE, MITOCHONDRIAL"/>
    <property type="match status" value="1"/>
</dbReference>
<dbReference type="Pfam" id="PF00696">
    <property type="entry name" value="AA_kinase"/>
    <property type="match status" value="1"/>
</dbReference>
<dbReference type="PIRSF" id="PIRSF000728">
    <property type="entry name" value="NAGK"/>
    <property type="match status" value="1"/>
</dbReference>
<dbReference type="PRINTS" id="PR00474">
    <property type="entry name" value="GLU5KINASE"/>
</dbReference>
<dbReference type="SUPFAM" id="SSF53633">
    <property type="entry name" value="Carbamate kinase-like"/>
    <property type="match status" value="1"/>
</dbReference>
<name>ARGB_NEIG1</name>